<organism>
    <name type="scientific">Escherichia coli (strain K12)</name>
    <dbReference type="NCBI Taxonomy" id="83333"/>
    <lineage>
        <taxon>Bacteria</taxon>
        <taxon>Pseudomonadati</taxon>
        <taxon>Pseudomonadota</taxon>
        <taxon>Gammaproteobacteria</taxon>
        <taxon>Enterobacterales</taxon>
        <taxon>Enterobacteriaceae</taxon>
        <taxon>Escherichia</taxon>
    </lineage>
</organism>
<evidence type="ECO:0000269" key="1">
    <source>
    </source>
</evidence>
<evidence type="ECO:0000305" key="2"/>
<evidence type="ECO:0007829" key="3">
    <source>
        <dbReference type="PDB" id="1KFS"/>
    </source>
</evidence>
<evidence type="ECO:0007829" key="4">
    <source>
        <dbReference type="PDB" id="1KLN"/>
    </source>
</evidence>
<evidence type="ECO:0007829" key="5">
    <source>
        <dbReference type="PDB" id="1KSP"/>
    </source>
</evidence>
<evidence type="ECO:0007829" key="6">
    <source>
        <dbReference type="PDB" id="2KFN"/>
    </source>
</evidence>
<protein>
    <recommendedName>
        <fullName>DNA polymerase I</fullName>
        <shortName>POL I</shortName>
        <ecNumber>2.7.7.7</ecNumber>
    </recommendedName>
</protein>
<gene>
    <name type="primary">polA</name>
    <name type="synonym">resA</name>
    <name type="ordered locus">b3863</name>
    <name type="ordered locus">JW3835</name>
</gene>
<reference key="1">
    <citation type="journal article" date="1982" name="J. Biol. Chem.">
        <title>Nucleotide sequence of the Escherichia coli polA gene and primary structure of DNA polymerase I.</title>
        <authorList>
            <person name="Joyce C.M."/>
            <person name="Kelley W.S."/>
            <person name="Grindley N.D.F."/>
        </authorList>
    </citation>
    <scope>NUCLEOTIDE SEQUENCE [GENOMIC DNA]</scope>
    <source>
        <strain>K12</strain>
    </source>
</reference>
<reference key="2">
    <citation type="journal article" date="1993" name="Nucleic Acids Res.">
        <title>Analysis of the Escherichia coli genome. III. DNA sequence of the region from 87.2 to 89.2 minutes.</title>
        <authorList>
            <person name="Plunkett G. III"/>
            <person name="Burland V."/>
            <person name="Daniels D.L."/>
            <person name="Blattner F.R."/>
        </authorList>
    </citation>
    <scope>NUCLEOTIDE SEQUENCE [LARGE SCALE GENOMIC DNA]</scope>
    <source>
        <strain>K12 / MG1655 / ATCC 47076</strain>
    </source>
</reference>
<reference key="3">
    <citation type="journal article" date="1997" name="Science">
        <title>The complete genome sequence of Escherichia coli K-12.</title>
        <authorList>
            <person name="Blattner F.R."/>
            <person name="Plunkett G. III"/>
            <person name="Bloch C.A."/>
            <person name="Perna N.T."/>
            <person name="Burland V."/>
            <person name="Riley M."/>
            <person name="Collado-Vides J."/>
            <person name="Glasner J.D."/>
            <person name="Rode C.K."/>
            <person name="Mayhew G.F."/>
            <person name="Gregor J."/>
            <person name="Davis N.W."/>
            <person name="Kirkpatrick H.A."/>
            <person name="Goeden M.A."/>
            <person name="Rose D.J."/>
            <person name="Mau B."/>
            <person name="Shao Y."/>
        </authorList>
    </citation>
    <scope>NUCLEOTIDE SEQUENCE [LARGE SCALE GENOMIC DNA]</scope>
    <source>
        <strain>K12 / MG1655 / ATCC 47076</strain>
    </source>
</reference>
<reference key="4">
    <citation type="journal article" date="2006" name="Mol. Syst. Biol.">
        <title>Highly accurate genome sequences of Escherichia coli K-12 strains MG1655 and W3110.</title>
        <authorList>
            <person name="Hayashi K."/>
            <person name="Morooka N."/>
            <person name="Yamamoto Y."/>
            <person name="Fujita K."/>
            <person name="Isono K."/>
            <person name="Choi S."/>
            <person name="Ohtsubo E."/>
            <person name="Baba T."/>
            <person name="Wanner B.L."/>
            <person name="Mori H."/>
            <person name="Horiuchi T."/>
        </authorList>
    </citation>
    <scope>NUCLEOTIDE SEQUENCE [LARGE SCALE GENOMIC DNA]</scope>
    <source>
        <strain>K12 / W3110 / ATCC 27325 / DSM 5911</strain>
    </source>
</reference>
<reference key="5">
    <citation type="journal article" date="1982" name="J. Bacteriol.">
        <title>Identification of two genes immediately downstream from the polA gene of Escherichia coli.</title>
        <authorList>
            <person name="Joyce C.M."/>
            <person name="Grindley N.D."/>
        </authorList>
    </citation>
    <scope>NUCLEOTIDE SEQUENCE [GENOMIC DNA] OF 918-928</scope>
    <source>
        <strain>K12</strain>
    </source>
</reference>
<reference key="6">
    <citation type="journal article" date="1983" name="J. Mol. Biol.">
        <title>Genetic characterization of early amber mutations in the Escherichia coli polA gene and purification of the amber peptides.</title>
        <authorList>
            <person name="Kelley W.S."/>
            <person name="Joyce C.M."/>
        </authorList>
    </citation>
    <scope>NUCLEOTIDE SEQUENCE [GENOMIC DNA] OF 284-350</scope>
</reference>
<reference key="7">
    <citation type="journal article" date="1982" name="J. Biol. Chem.">
        <title>Escherichia coli DNA polymerase I. Sequence characterization and secondary structure prediction.</title>
        <authorList>
            <person name="Brown W.E."/>
            <person name="Stump K.H."/>
            <person name="Kelley W.S."/>
        </authorList>
    </citation>
    <scope>AMINO-ACID COMPOSITION</scope>
    <scope>PARTIAL PROTEIN SEQUENCE</scope>
</reference>
<reference key="8">
    <citation type="journal article" date="1997" name="Electrophoresis">
        <title>Escherichia coli proteome analysis using the gene-protein database.</title>
        <authorList>
            <person name="VanBogelen R.A."/>
            <person name="Abshire K.Z."/>
            <person name="Moldover B."/>
            <person name="Olson E.R."/>
            <person name="Neidhardt F.C."/>
        </authorList>
    </citation>
    <scope>IDENTIFICATION BY 2D-GEL</scope>
</reference>
<reference key="9">
    <citation type="journal article" date="2022" name="G3 (Bethesda)">
        <title>Identification of genetic interactions with priB links the PriA/PriB DNA replication restart pathway to double-strand DNA break repair in Escherichia coli.</title>
        <authorList>
            <person name="McKenzie A.M."/>
            <person name="Henry C."/>
            <person name="Myers K.S."/>
            <person name="Place M.M."/>
            <person name="Keck J.L."/>
        </authorList>
    </citation>
    <scope>GENETIC INTERACTION</scope>
    <source>
        <strain>K12 / MG1655 / ATCC 47076</strain>
    </source>
</reference>
<reference key="10">
    <citation type="journal article" date="1985" name="Nature">
        <title>Structure of large fragment of Escherichia coli DNA polymerase I complexed with dTMP.</title>
        <authorList>
            <person name="Ollis D.L."/>
            <person name="Brick P."/>
            <person name="Hamlin R."/>
            <person name="Xuong N.G."/>
            <person name="Steitz T.A."/>
        </authorList>
    </citation>
    <scope>X-RAY CRYSTALLOGRAPHY (2.8 ANGSTROMS) OF KLENOW FRAGMENT</scope>
</reference>
<reference key="11">
    <citation type="journal article" date="1991" name="EMBO J.">
        <title>Structural basis for the 3'-5' exonuclease activity of Escherichia coli DNA polymerase I: a two metal ion mechanism.</title>
        <authorList>
            <person name="Beese L.S."/>
            <person name="Steitz T.A."/>
        </authorList>
    </citation>
    <scope>X-RAY CRYSTALLOGRAPHY (2.6 ANGSTROMS) OF KLENOW FRAGMENT</scope>
</reference>
<reference key="12">
    <citation type="journal article" date="1993" name="Science">
        <title>Structure of DNA polymerase I Klenow fragment bound to duplex DNA.</title>
        <authorList>
            <person name="Beese L.S."/>
            <person name="Derbyshire V."/>
            <person name="Steitz T.A."/>
        </authorList>
    </citation>
    <scope>X-RAY CRYSTALLOGRAPHY (3.2 ANGSTROMS) OF KLENOW FRAGMENT</scope>
</reference>
<reference key="13">
    <citation type="journal article" date="1993" name="Biochemistry">
        <title>Crystal structures of the Klenow fragment of DNA polymerase I complexed with deoxynucleoside triphosphate and pyrophosphate.</title>
        <authorList>
            <person name="Beese L.S."/>
            <person name="Friedman J.M."/>
            <person name="Steitz T.A."/>
        </authorList>
    </citation>
    <scope>X-RAY CRYSTALLOGRAPHY (3.9 ANGSTROMS) OF KLENOW FRAGMENT</scope>
</reference>
<reference key="14">
    <citation type="journal article" date="1998" name="J. Mol. Biol.">
        <title>Structural principles for the inhibition of the 3'-5' exonuclease activity of Escherichia coli DNA polymerase I by phosphorothioates.</title>
        <authorList>
            <person name="Brautigam C.A."/>
            <person name="Steitz T.A."/>
        </authorList>
    </citation>
    <scope>X-RAY CRYSTALLOGRAPHY (2.1 ANGSTROMS) OF KLENOW FRAGMENT</scope>
</reference>
<reference key="15">
    <citation type="journal article" date="1999" name="Biochemistry">
        <title>Structures of normal single-stranded DNA and deoxyribo-3'-S-phosphorothiolates bound to the 3'-5' exonucleolytic active site of DNA polymerase I from Escherichia coli.</title>
        <authorList>
            <person name="Brautigam C.A."/>
            <person name="Sun S."/>
            <person name="Piccirilli J.A."/>
            <person name="Steitz T.A."/>
        </authorList>
    </citation>
    <scope>X-RAY CRYSTALLOGRAPHY (2.6 ANGSTROMS) OF KLENOW FRAGMENT</scope>
</reference>
<reference key="16">
    <citation type="journal article" date="1999" name="Proc. Natl. Acad. Sci. U.S.A.">
        <title>Structural origins of the exonuclease resistance of a zwitterionic RNA.</title>
        <authorList>
            <person name="Teplova M."/>
            <person name="Wallace S.T."/>
            <person name="Tereshko V."/>
            <person name="Minasov G."/>
            <person name="Symons A.M."/>
            <person name="Cook P.D."/>
            <person name="Manoharan M."/>
            <person name="Egli M."/>
        </authorList>
    </citation>
    <scope>X-RAY CRYSTALLOGRAPHY (2.08 ANGSTROMS) OF KLENOW FRAGMENT</scope>
</reference>
<reference key="17">
    <citation type="journal article" date="1993" name="Arch. Biochem. Biophys.">
        <title>Sequential proton NMR resonance assignments, circular dichroism, and structural properties of a 50-residue substrate-binding peptide from DNA polymerase I.</title>
        <authorList>
            <person name="Mullen G.P."/>
            <person name="Vaughn J.B. Jr."/>
            <person name="Mildvan A.S."/>
        </authorList>
    </citation>
    <scope>STRUCTURE BY NMR OF 728-777</scope>
</reference>
<sequence>MVQIPQNPLILVDGSSYLYRAYHAFPPLTNSAGEPTGAMYGVLNMLRSLIMQYKPTHAAVVFDAKGKTFRDELFEHYKSHRPPMPDDLRAQIEPLHAMVKAMGLPLLAVSGVEADDVIGTLAREAEKAGRPVLISTGDKDMAQLVTPNITLINTMTNTILGPEEVVNKYGVPPELIIDFLALMGDSSDNIPGVPGVGEKTAQALLQGLGGLDTLYAEPEKIAGLSFRGAKTMAAKLEQNKEVAYLSYQLATIKTDVELELTCEQLEVQQPAAEELLGLFKKYEFKRWTADVEAGKWLQAKGAKPAAKPQETSVADEAPEVTATVISYDNYVTILDEETLKAWIAKLEKAPVFAFDTETDSLDNISANLVGLSFAIEPGVAAYIPVAHDYLDAPDQISRERALELLKPLLEDEKALKVGQNLKYDRGILANYGIELRGIAFDTMLESYILNSVAGRHDMDSLAERWLKHKTITFEEIAGKGKNQLTFNQIALEEAGRYAAEDADVTLQLHLKMWPDLQKHKGPLNVFENIEMPLVPVLSRIERNGVKIDPKVLHNHSEELTLRLAELEKKAHEIAGEEFNLSSTKQLQTILFEKQGIKPLKKTPGGAPSTSEEVLEELALDYPLPKVILEYRGLAKLKSTYTDKLPLMINPKTGRVHTSYHQAVTATGRLSSTDPNLQNIPVRNEEGRRIRQAFIAPEDYVIVSADYSQIELRIMAHLSRDKGLLTAFAEGKDIHRATAAEVFGLPLETVTSEQRRSAKAINFGLIYGMSAFGLARQLNIPRKEAQKYMDLYFERYPGVLEYMERTRAQAKEQGYVETLDGRRLYLPDIKSSNGARRAAAERAAINAPMQGTAADIIKRAMIAVDAWLQAEQPRVRMIMQVHDELVFEVHKDDVDAVAKQIHQLMENCTRLDVPLLVEVGSGENWDQAH</sequence>
<comment type="function">
    <text>In addition to polymerase activity, this DNA polymerase exhibits 3'-5' and 5'-3' exonuclease activity. It is able to utilize nicked circular duplex DNA as a template and can unwind the parental DNA strand from its template.</text>
</comment>
<comment type="function">
    <text evidence="1">Genetic interactions among priB, dam, lexA, nagC, polA, rdgB, rdgB, rep and uup link the PriA-PriB replication restart pathway to DNA double-strand break repair.</text>
</comment>
<comment type="catalytic activity">
    <reaction>
        <text>DNA(n) + a 2'-deoxyribonucleoside 5'-triphosphate = DNA(n+1) + diphosphate</text>
        <dbReference type="Rhea" id="RHEA:22508"/>
        <dbReference type="Rhea" id="RHEA-COMP:17339"/>
        <dbReference type="Rhea" id="RHEA-COMP:17340"/>
        <dbReference type="ChEBI" id="CHEBI:33019"/>
        <dbReference type="ChEBI" id="CHEBI:61560"/>
        <dbReference type="ChEBI" id="CHEBI:173112"/>
        <dbReference type="EC" id="2.7.7.7"/>
    </reaction>
</comment>
<comment type="subunit">
    <text>Single-chain monomer with multiple functions.</text>
</comment>
<comment type="similarity">
    <text evidence="2">Belongs to the DNA polymerase type-A family.</text>
</comment>
<keyword id="KW-0002">3D-structure</keyword>
<keyword id="KW-0903">Direct protein sequencing</keyword>
<keyword id="KW-0227">DNA damage</keyword>
<keyword id="KW-0234">DNA repair</keyword>
<keyword id="KW-0235">DNA replication</keyword>
<keyword id="KW-0238">DNA-binding</keyword>
<keyword id="KW-0239">DNA-directed DNA polymerase</keyword>
<keyword id="KW-0269">Exonuclease</keyword>
<keyword id="KW-0378">Hydrolase</keyword>
<keyword id="KW-0540">Nuclease</keyword>
<keyword id="KW-0548">Nucleotidyltransferase</keyword>
<keyword id="KW-1185">Reference proteome</keyword>
<keyword id="KW-0808">Transferase</keyword>
<accession>P00582</accession>
<accession>Q2M8G1</accession>
<dbReference type="EC" id="2.7.7.7"/>
<dbReference type="EMBL" id="V00317">
    <property type="protein sequence ID" value="CAA23607.1"/>
    <property type="molecule type" value="Genomic_DNA"/>
</dbReference>
<dbReference type="EMBL" id="L19201">
    <property type="protein sequence ID" value="AAB02998.1"/>
    <property type="molecule type" value="Genomic_DNA"/>
</dbReference>
<dbReference type="EMBL" id="U00096">
    <property type="protein sequence ID" value="AAC76861.1"/>
    <property type="molecule type" value="Genomic_DNA"/>
</dbReference>
<dbReference type="EMBL" id="AP009048">
    <property type="protein sequence ID" value="BAE77445.1"/>
    <property type="molecule type" value="Genomic_DNA"/>
</dbReference>
<dbReference type="EMBL" id="J01663">
    <property type="protein sequence ID" value="AAA24402.1"/>
    <property type="molecule type" value="Genomic_DNA"/>
</dbReference>
<dbReference type="EMBL" id="J01664">
    <property type="protein sequence ID" value="AAA24404.1"/>
    <property type="molecule type" value="Genomic_DNA"/>
</dbReference>
<dbReference type="PIR" id="A92360">
    <property type="entry name" value="DJECI"/>
</dbReference>
<dbReference type="RefSeq" id="NP_418300.1">
    <property type="nucleotide sequence ID" value="NC_000913.3"/>
</dbReference>
<dbReference type="RefSeq" id="WP_000250006.1">
    <property type="nucleotide sequence ID" value="NZ_SSZK01000026.1"/>
</dbReference>
<dbReference type="PDB" id="1D8Y">
    <property type="method" value="X-ray"/>
    <property type="resolution" value="2.08 A"/>
    <property type="chains" value="A=324-928"/>
</dbReference>
<dbReference type="PDB" id="1D9D">
    <property type="method" value="X-ray"/>
    <property type="resolution" value="2.18 A"/>
    <property type="chains" value="A=324-928"/>
</dbReference>
<dbReference type="PDB" id="1D9F">
    <property type="method" value="X-ray"/>
    <property type="resolution" value="3.00 A"/>
    <property type="chains" value="A=324-928"/>
</dbReference>
<dbReference type="PDB" id="1DPI">
    <property type="method" value="X-ray"/>
    <property type="resolution" value="2.80 A"/>
    <property type="chains" value="A=324-928"/>
</dbReference>
<dbReference type="PDB" id="1KFD">
    <property type="method" value="X-ray"/>
    <property type="resolution" value="3.90 A"/>
    <property type="chains" value="A=324-928"/>
</dbReference>
<dbReference type="PDB" id="1KFS">
    <property type="method" value="X-ray"/>
    <property type="resolution" value="2.10 A"/>
    <property type="chains" value="A=324-928"/>
</dbReference>
<dbReference type="PDB" id="1KLN">
    <property type="method" value="X-ray"/>
    <property type="resolution" value="3.20 A"/>
    <property type="chains" value="A=324-928"/>
</dbReference>
<dbReference type="PDB" id="1KRP">
    <property type="method" value="X-ray"/>
    <property type="resolution" value="2.20 A"/>
    <property type="chains" value="A=324-928"/>
</dbReference>
<dbReference type="PDB" id="1KSP">
    <property type="method" value="X-ray"/>
    <property type="resolution" value="2.30 A"/>
    <property type="chains" value="A=324-928"/>
</dbReference>
<dbReference type="PDB" id="1QSL">
    <property type="method" value="X-ray"/>
    <property type="resolution" value="2.20 A"/>
    <property type="chains" value="A=324-928"/>
</dbReference>
<dbReference type="PDB" id="2KFN">
    <property type="method" value="X-ray"/>
    <property type="resolution" value="2.03 A"/>
    <property type="chains" value="A=324-928"/>
</dbReference>
<dbReference type="PDB" id="2KFZ">
    <property type="method" value="X-ray"/>
    <property type="resolution" value="2.03 A"/>
    <property type="chains" value="A=324-928"/>
</dbReference>
<dbReference type="PDB" id="2KZM">
    <property type="method" value="X-ray"/>
    <property type="resolution" value="2.60 A"/>
    <property type="chains" value="A=324-928"/>
</dbReference>
<dbReference type="PDB" id="2KZZ">
    <property type="method" value="X-ray"/>
    <property type="resolution" value="2.25 A"/>
    <property type="chains" value="A=324-928"/>
</dbReference>
<dbReference type="PDB" id="8OO6">
    <property type="method" value="EM"/>
    <property type="resolution" value="4.30 A"/>
    <property type="chains" value="A=328-928"/>
</dbReference>
<dbReference type="PDB" id="8OOY">
    <property type="method" value="EM"/>
    <property type="resolution" value="4.00 A"/>
    <property type="chains" value="A=328-928"/>
</dbReference>
<dbReference type="PDBsum" id="1D8Y"/>
<dbReference type="PDBsum" id="1D9D"/>
<dbReference type="PDBsum" id="1D9F"/>
<dbReference type="PDBsum" id="1DPI"/>
<dbReference type="PDBsum" id="1KFD"/>
<dbReference type="PDBsum" id="1KFS"/>
<dbReference type="PDBsum" id="1KLN"/>
<dbReference type="PDBsum" id="1KRP"/>
<dbReference type="PDBsum" id="1KSP"/>
<dbReference type="PDBsum" id="1QSL"/>
<dbReference type="PDBsum" id="2KFN"/>
<dbReference type="PDBsum" id="2KFZ"/>
<dbReference type="PDBsum" id="2KZM"/>
<dbReference type="PDBsum" id="2KZZ"/>
<dbReference type="PDBsum" id="8OO6"/>
<dbReference type="PDBsum" id="8OOY"/>
<dbReference type="EMDB" id="EMD-17005"/>
<dbReference type="EMDB" id="EMD-17033"/>
<dbReference type="SMR" id="P00582"/>
<dbReference type="BioGRID" id="4262182">
    <property type="interactions" value="127"/>
</dbReference>
<dbReference type="DIP" id="DIP-10524N"/>
<dbReference type="FunCoup" id="P00582">
    <property type="interactions" value="666"/>
</dbReference>
<dbReference type="IntAct" id="P00582">
    <property type="interactions" value="33"/>
</dbReference>
<dbReference type="STRING" id="511145.b3863"/>
<dbReference type="BindingDB" id="P00582"/>
<dbReference type="ChEMBL" id="CHEMBL4298"/>
<dbReference type="DrugBank" id="DB00548">
    <property type="generic name" value="Azelaic acid"/>
</dbReference>
<dbReference type="DrugBank" id="DB08432">
    <property type="generic name" value="THYMIDINE-5'-THIOPHOSPHATE"/>
</dbReference>
<dbReference type="jPOST" id="P00582"/>
<dbReference type="PaxDb" id="511145-b3863"/>
<dbReference type="EnsemblBacteria" id="AAC76861">
    <property type="protein sequence ID" value="AAC76861"/>
    <property type="gene ID" value="b3863"/>
</dbReference>
<dbReference type="GeneID" id="93778073"/>
<dbReference type="GeneID" id="948356"/>
<dbReference type="KEGG" id="ecj:JW3835"/>
<dbReference type="KEGG" id="eco:b3863"/>
<dbReference type="KEGG" id="ecoc:C3026_20885"/>
<dbReference type="PATRIC" id="fig|1411691.4.peg.2851"/>
<dbReference type="EchoBASE" id="EB0739"/>
<dbReference type="eggNOG" id="COG0258">
    <property type="taxonomic scope" value="Bacteria"/>
</dbReference>
<dbReference type="eggNOG" id="COG0749">
    <property type="taxonomic scope" value="Bacteria"/>
</dbReference>
<dbReference type="HOGENOM" id="CLU_004675_0_1_6"/>
<dbReference type="InParanoid" id="P00582"/>
<dbReference type="OMA" id="NRPPMPD"/>
<dbReference type="OrthoDB" id="9806424at2"/>
<dbReference type="PhylomeDB" id="P00582"/>
<dbReference type="BioCyc" id="EcoCyc:EG10746-MONOMER"/>
<dbReference type="BioCyc" id="MetaCyc:EG10746-MONOMER"/>
<dbReference type="BRENDA" id="2.7.7.7">
    <property type="organism ID" value="2026"/>
</dbReference>
<dbReference type="SABIO-RK" id="P00582"/>
<dbReference type="EvolutionaryTrace" id="P00582"/>
<dbReference type="PRO" id="PR:P00582"/>
<dbReference type="Proteomes" id="UP000000625">
    <property type="component" value="Chromosome"/>
</dbReference>
<dbReference type="GO" id="GO:0005737">
    <property type="term" value="C:cytoplasm"/>
    <property type="evidence" value="ECO:0000314"/>
    <property type="project" value="EcoCyc"/>
</dbReference>
<dbReference type="GO" id="GO:0005829">
    <property type="term" value="C:cytosol"/>
    <property type="evidence" value="ECO:0000314"/>
    <property type="project" value="EcoCyc"/>
</dbReference>
<dbReference type="GO" id="GO:0008408">
    <property type="term" value="F:3'-5' exonuclease activity"/>
    <property type="evidence" value="ECO:0000314"/>
    <property type="project" value="EcoCyc"/>
</dbReference>
<dbReference type="GO" id="GO:0008409">
    <property type="term" value="F:5'-3' exonuclease activity"/>
    <property type="evidence" value="ECO:0000314"/>
    <property type="project" value="EcoCyc"/>
</dbReference>
<dbReference type="GO" id="GO:0003677">
    <property type="term" value="F:DNA binding"/>
    <property type="evidence" value="ECO:0000314"/>
    <property type="project" value="EcoCyc"/>
</dbReference>
<dbReference type="GO" id="GO:0003887">
    <property type="term" value="F:DNA-directed DNA polymerase activity"/>
    <property type="evidence" value="ECO:0000314"/>
    <property type="project" value="EcoCyc"/>
</dbReference>
<dbReference type="GO" id="GO:0006284">
    <property type="term" value="P:base-excision repair"/>
    <property type="evidence" value="ECO:0000314"/>
    <property type="project" value="EcoCyc"/>
</dbReference>
<dbReference type="GO" id="GO:0006281">
    <property type="term" value="P:DNA repair"/>
    <property type="evidence" value="ECO:0000315"/>
    <property type="project" value="EcoCyc"/>
</dbReference>
<dbReference type="GO" id="GO:0006260">
    <property type="term" value="P:DNA replication"/>
    <property type="evidence" value="ECO:0000314"/>
    <property type="project" value="EcoCyc"/>
</dbReference>
<dbReference type="GO" id="GO:0006261">
    <property type="term" value="P:DNA-templated DNA replication"/>
    <property type="evidence" value="ECO:0000314"/>
    <property type="project" value="EcoCyc"/>
</dbReference>
<dbReference type="GO" id="GO:0006302">
    <property type="term" value="P:double-strand break repair"/>
    <property type="evidence" value="ECO:0000318"/>
    <property type="project" value="GO_Central"/>
</dbReference>
<dbReference type="CDD" id="cd08637">
    <property type="entry name" value="DNA_pol_A_pol_I_C"/>
    <property type="match status" value="1"/>
</dbReference>
<dbReference type="CDD" id="cd06139">
    <property type="entry name" value="DNA_polA_I_Ecoli_like_exo"/>
    <property type="match status" value="1"/>
</dbReference>
<dbReference type="CDD" id="cd09898">
    <property type="entry name" value="H3TH_53EXO"/>
    <property type="match status" value="1"/>
</dbReference>
<dbReference type="CDD" id="cd09859">
    <property type="entry name" value="PIN_53EXO"/>
    <property type="match status" value="1"/>
</dbReference>
<dbReference type="FunFam" id="1.10.150.20:FF:000002">
    <property type="entry name" value="DNA polymerase I"/>
    <property type="match status" value="1"/>
</dbReference>
<dbReference type="FunFam" id="1.10.150.20:FF:000003">
    <property type="entry name" value="DNA polymerase I"/>
    <property type="match status" value="1"/>
</dbReference>
<dbReference type="FunFam" id="1.20.1060.10:FF:000001">
    <property type="entry name" value="DNA polymerase I"/>
    <property type="match status" value="1"/>
</dbReference>
<dbReference type="FunFam" id="3.30.420.10:FF:000026">
    <property type="entry name" value="DNA polymerase I"/>
    <property type="match status" value="1"/>
</dbReference>
<dbReference type="FunFam" id="3.40.50.1010:FF:000001">
    <property type="entry name" value="DNA polymerase I"/>
    <property type="match status" value="1"/>
</dbReference>
<dbReference type="Gene3D" id="3.30.70.370">
    <property type="match status" value="1"/>
</dbReference>
<dbReference type="Gene3D" id="1.10.150.20">
    <property type="entry name" value="5' to 3' exonuclease, C-terminal subdomain"/>
    <property type="match status" value="2"/>
</dbReference>
<dbReference type="Gene3D" id="3.40.50.1010">
    <property type="entry name" value="5'-nuclease"/>
    <property type="match status" value="1"/>
</dbReference>
<dbReference type="Gene3D" id="3.30.420.10">
    <property type="entry name" value="Ribonuclease H-like superfamily/Ribonuclease H"/>
    <property type="match status" value="1"/>
</dbReference>
<dbReference type="Gene3D" id="1.20.1060.10">
    <property type="entry name" value="Taq DNA Polymerase, Chain T, domain 4"/>
    <property type="match status" value="1"/>
</dbReference>
<dbReference type="InterPro" id="IPR002562">
    <property type="entry name" value="3'-5'_exonuclease_dom"/>
</dbReference>
<dbReference type="InterPro" id="IPR020046">
    <property type="entry name" value="5-3_exonucl_a-hlix_arch_N"/>
</dbReference>
<dbReference type="InterPro" id="IPR002421">
    <property type="entry name" value="5-3_exonuclease"/>
</dbReference>
<dbReference type="InterPro" id="IPR036279">
    <property type="entry name" value="5-3_exonuclease_C_sf"/>
</dbReference>
<dbReference type="InterPro" id="IPR019760">
    <property type="entry name" value="DNA-dir_DNA_pol_A_CS"/>
</dbReference>
<dbReference type="InterPro" id="IPR001098">
    <property type="entry name" value="DNA-dir_DNA_pol_A_palm_dom"/>
</dbReference>
<dbReference type="InterPro" id="IPR043502">
    <property type="entry name" value="DNA/RNA_pol_sf"/>
</dbReference>
<dbReference type="InterPro" id="IPR020045">
    <property type="entry name" value="DNA_polI_H3TH"/>
</dbReference>
<dbReference type="InterPro" id="IPR018320">
    <property type="entry name" value="DNA_polymerase_1"/>
</dbReference>
<dbReference type="InterPro" id="IPR002298">
    <property type="entry name" value="DNA_polymerase_A"/>
</dbReference>
<dbReference type="InterPro" id="IPR008918">
    <property type="entry name" value="HhH2"/>
</dbReference>
<dbReference type="InterPro" id="IPR029060">
    <property type="entry name" value="PIN-like_dom_sf"/>
</dbReference>
<dbReference type="InterPro" id="IPR012337">
    <property type="entry name" value="RNaseH-like_sf"/>
</dbReference>
<dbReference type="InterPro" id="IPR036397">
    <property type="entry name" value="RNaseH_sf"/>
</dbReference>
<dbReference type="NCBIfam" id="TIGR00593">
    <property type="entry name" value="pola"/>
    <property type="match status" value="1"/>
</dbReference>
<dbReference type="NCBIfam" id="NF004397">
    <property type="entry name" value="PRK05755.1"/>
    <property type="match status" value="1"/>
</dbReference>
<dbReference type="PANTHER" id="PTHR10133">
    <property type="entry name" value="DNA POLYMERASE I"/>
    <property type="match status" value="1"/>
</dbReference>
<dbReference type="PANTHER" id="PTHR10133:SF27">
    <property type="entry name" value="DNA POLYMERASE NU"/>
    <property type="match status" value="1"/>
</dbReference>
<dbReference type="Pfam" id="PF01367">
    <property type="entry name" value="5_3_exonuc"/>
    <property type="match status" value="1"/>
</dbReference>
<dbReference type="Pfam" id="PF02739">
    <property type="entry name" value="5_3_exonuc_N"/>
    <property type="match status" value="1"/>
</dbReference>
<dbReference type="Pfam" id="PF00476">
    <property type="entry name" value="DNA_pol_A"/>
    <property type="match status" value="1"/>
</dbReference>
<dbReference type="Pfam" id="PF01612">
    <property type="entry name" value="DNA_pol_A_exo1"/>
    <property type="match status" value="1"/>
</dbReference>
<dbReference type="PRINTS" id="PR00868">
    <property type="entry name" value="DNAPOLI"/>
</dbReference>
<dbReference type="SMART" id="SM00474">
    <property type="entry name" value="35EXOc"/>
    <property type="match status" value="1"/>
</dbReference>
<dbReference type="SMART" id="SM00475">
    <property type="entry name" value="53EXOc"/>
    <property type="match status" value="1"/>
</dbReference>
<dbReference type="SMART" id="SM00279">
    <property type="entry name" value="HhH2"/>
    <property type="match status" value="1"/>
</dbReference>
<dbReference type="SMART" id="SM00482">
    <property type="entry name" value="POLAc"/>
    <property type="match status" value="1"/>
</dbReference>
<dbReference type="SUPFAM" id="SSF47807">
    <property type="entry name" value="5' to 3' exonuclease, C-terminal subdomain"/>
    <property type="match status" value="1"/>
</dbReference>
<dbReference type="SUPFAM" id="SSF56672">
    <property type="entry name" value="DNA/RNA polymerases"/>
    <property type="match status" value="1"/>
</dbReference>
<dbReference type="SUPFAM" id="SSF88723">
    <property type="entry name" value="PIN domain-like"/>
    <property type="match status" value="1"/>
</dbReference>
<dbReference type="SUPFAM" id="SSF53098">
    <property type="entry name" value="Ribonuclease H-like"/>
    <property type="match status" value="1"/>
</dbReference>
<dbReference type="PROSITE" id="PS00447">
    <property type="entry name" value="DNA_POLYMERASE_A"/>
    <property type="match status" value="1"/>
</dbReference>
<proteinExistence type="evidence at protein level"/>
<feature type="chain" id="PRO_0000101239" description="DNA polymerase I">
    <location>
        <begin position="1"/>
        <end position="928"/>
    </location>
</feature>
<feature type="domain" description="5'-3' exonuclease">
    <location>
        <begin position="1"/>
        <end position="323"/>
    </location>
</feature>
<feature type="domain" description="3'-5' exonuclease">
    <location>
        <begin position="324"/>
        <end position="517"/>
    </location>
</feature>
<feature type="region of interest" description="Klenow fragment">
    <location>
        <begin position="324"/>
        <end position="928"/>
    </location>
</feature>
<feature type="region of interest" description="Polymerase">
    <location>
        <begin position="521"/>
        <end position="928"/>
    </location>
</feature>
<feature type="strand" evidence="6">
    <location>
        <begin position="327"/>
        <end position="332"/>
    </location>
</feature>
<feature type="helix" evidence="6">
    <location>
        <begin position="336"/>
        <end position="347"/>
    </location>
</feature>
<feature type="strand" evidence="6">
    <location>
        <begin position="349"/>
        <end position="359"/>
    </location>
</feature>
<feature type="turn" evidence="6">
    <location>
        <begin position="363"/>
        <end position="365"/>
    </location>
</feature>
<feature type="strand" evidence="6">
    <location>
        <begin position="368"/>
        <end position="376"/>
    </location>
</feature>
<feature type="strand" evidence="6">
    <location>
        <begin position="379"/>
        <end position="384"/>
    </location>
</feature>
<feature type="helix" evidence="6">
    <location>
        <begin position="398"/>
        <end position="409"/>
    </location>
</feature>
<feature type="strand" evidence="6">
    <location>
        <begin position="416"/>
        <end position="420"/>
    </location>
</feature>
<feature type="helix" evidence="6">
    <location>
        <begin position="421"/>
        <end position="429"/>
    </location>
</feature>
<feature type="turn" evidence="6">
    <location>
        <begin position="430"/>
        <end position="432"/>
    </location>
</feature>
<feature type="strand" evidence="6">
    <location>
        <begin position="438"/>
        <end position="441"/>
    </location>
</feature>
<feature type="helix" evidence="6">
    <location>
        <begin position="442"/>
        <end position="449"/>
    </location>
</feature>
<feature type="helix" evidence="5">
    <location>
        <begin position="451"/>
        <end position="453"/>
    </location>
</feature>
<feature type="helix" evidence="6">
    <location>
        <begin position="458"/>
        <end position="465"/>
    </location>
</feature>
<feature type="helix" evidence="6">
    <location>
        <begin position="473"/>
        <end position="477"/>
    </location>
</feature>
<feature type="helix" evidence="3">
    <location>
        <begin position="480"/>
        <end position="482"/>
    </location>
</feature>
<feature type="helix" evidence="6">
    <location>
        <begin position="486"/>
        <end position="488"/>
    </location>
</feature>
<feature type="helix" evidence="6">
    <location>
        <begin position="491"/>
        <end position="515"/>
    </location>
</feature>
<feature type="helix" evidence="6">
    <location>
        <begin position="520"/>
        <end position="528"/>
    </location>
</feature>
<feature type="helix" evidence="6">
    <location>
        <begin position="530"/>
        <end position="543"/>
    </location>
</feature>
<feature type="strand" evidence="4">
    <location>
        <begin position="545"/>
        <end position="547"/>
    </location>
</feature>
<feature type="helix" evidence="6">
    <location>
        <begin position="549"/>
        <end position="573"/>
    </location>
</feature>
<feature type="strand" evidence="6">
    <location>
        <begin position="574"/>
        <end position="576"/>
    </location>
</feature>
<feature type="turn" evidence="6">
    <location>
        <begin position="582"/>
        <end position="585"/>
    </location>
</feature>
<feature type="helix" evidence="6">
    <location>
        <begin position="587"/>
        <end position="590"/>
    </location>
</feature>
<feature type="turn" evidence="6">
    <location>
        <begin position="591"/>
        <end position="593"/>
    </location>
</feature>
<feature type="turn" evidence="6">
    <location>
        <begin position="608"/>
        <end position="610"/>
    </location>
</feature>
<feature type="helix" evidence="6">
    <location>
        <begin position="613"/>
        <end position="617"/>
    </location>
</feature>
<feature type="turn" evidence="6">
    <location>
        <begin position="618"/>
        <end position="620"/>
    </location>
</feature>
<feature type="helix" evidence="6">
    <location>
        <begin position="623"/>
        <end position="639"/>
    </location>
</feature>
<feature type="turn" evidence="6">
    <location>
        <begin position="640"/>
        <end position="643"/>
    </location>
</feature>
<feature type="helix" evidence="6">
    <location>
        <begin position="644"/>
        <end position="647"/>
    </location>
</feature>
<feature type="turn" evidence="6">
    <location>
        <begin position="650"/>
        <end position="652"/>
    </location>
</feature>
<feature type="strand" evidence="6">
    <location>
        <begin position="653"/>
        <end position="655"/>
    </location>
</feature>
<feature type="strand" evidence="6">
    <location>
        <begin position="658"/>
        <end position="662"/>
    </location>
</feature>
<feature type="strand" evidence="6">
    <location>
        <begin position="665"/>
        <end position="667"/>
    </location>
</feature>
<feature type="strand" evidence="6">
    <location>
        <begin position="670"/>
        <end position="674"/>
    </location>
</feature>
<feature type="helix" evidence="6">
    <location>
        <begin position="676"/>
        <end position="678"/>
    </location>
</feature>
<feature type="strand" evidence="6">
    <location>
        <begin position="681"/>
        <end position="683"/>
    </location>
</feature>
<feature type="helix" evidence="6">
    <location>
        <begin position="684"/>
        <end position="691"/>
    </location>
</feature>
<feature type="strand" evidence="6">
    <location>
        <begin position="699"/>
        <end position="706"/>
    </location>
</feature>
<feature type="helix" evidence="6">
    <location>
        <begin position="709"/>
        <end position="717"/>
    </location>
</feature>
<feature type="helix" evidence="6">
    <location>
        <begin position="721"/>
        <end position="728"/>
    </location>
</feature>
<feature type="helix" evidence="6">
    <location>
        <begin position="733"/>
        <end position="741"/>
    </location>
</feature>
<feature type="helix" evidence="6">
    <location>
        <begin position="746"/>
        <end position="748"/>
    </location>
</feature>
<feature type="helix" evidence="6">
    <location>
        <begin position="751"/>
        <end position="765"/>
    </location>
</feature>
<feature type="helix" evidence="6">
    <location>
        <begin position="772"/>
        <end position="777"/>
    </location>
</feature>
<feature type="turn" evidence="6">
    <location>
        <begin position="781"/>
        <end position="783"/>
    </location>
</feature>
<feature type="helix" evidence="6">
    <location>
        <begin position="784"/>
        <end position="794"/>
    </location>
</feature>
<feature type="helix" evidence="6">
    <location>
        <begin position="796"/>
        <end position="812"/>
    </location>
</feature>
<feature type="strand" evidence="6">
    <location>
        <begin position="813"/>
        <end position="816"/>
    </location>
</feature>
<feature type="strand" evidence="6">
    <location>
        <begin position="822"/>
        <end position="824"/>
    </location>
</feature>
<feature type="turn" evidence="6">
    <location>
        <begin position="826"/>
        <end position="829"/>
    </location>
</feature>
<feature type="helix" evidence="6">
    <location>
        <begin position="833"/>
        <end position="870"/>
    </location>
</feature>
<feature type="strand" evidence="6">
    <location>
        <begin position="873"/>
        <end position="880"/>
    </location>
</feature>
<feature type="strand" evidence="6">
    <location>
        <begin position="883"/>
        <end position="889"/>
    </location>
</feature>
<feature type="turn" evidence="6">
    <location>
        <begin position="890"/>
        <end position="892"/>
    </location>
</feature>
<feature type="helix" evidence="6">
    <location>
        <begin position="893"/>
        <end position="906"/>
    </location>
</feature>
<feature type="strand" evidence="6">
    <location>
        <begin position="910"/>
        <end position="912"/>
    </location>
</feature>
<feature type="strand" evidence="6">
    <location>
        <begin position="916"/>
        <end position="923"/>
    </location>
</feature>
<feature type="helix" evidence="6">
    <location>
        <begin position="924"/>
        <end position="927"/>
    </location>
</feature>
<name>DPO1_ECOLI</name>